<sequence length="693" mass="76615">MAREFSLEKTRNIGIMAHIDAGKTTTTERILYYTGRIHKIGETHEGASQMDWMEQEQDRGITITSAATTAAWEGHRVNIIDTPGHVDFTVEVERSLRVLDGAVTVLDAQSGVEPQTETVWRQATTYGVPRIVFVNKMDKLGANFEYSVSTLHDRLQANAAPIQLPIGAEDEFEAIIDLVEMKCFKYTNDLGTEIEEIEIPEDHLDRAEEARASLIEAVAETSDELMEKYLGDEEISVSELKEAIRQATTNVEFYPVLCGTAFKNKGVQLMLDAVIDYLPSPLDVKPIIGHRASNPEEEVIAKADDSAEFAALAFKVMTDPYVGKLTFFRVYSGTMTSGSYVKNSTKGKRERVGRLLQMHANSRQEIDTVYSGDIAAAVGLKDTGTGDTLCGEKNDIILESMEFPEPVIHLSVEPKSKADQDKMTQALVKLQEEDPTFHAHTDEETGQVIIGGMGELHLDILVDRMKKEFNVECNVGAPMVSYRETFKSSAQVQGKFSRQSGGRGQYGDVHIEFTPNETGAGFEFENAIVGGVVPREYIPSVEAGLKDAMENGVLAGYPLIDVKAKLYDGSYHDVDSSEMAFKIAASLALKEAAKKCDPVILEPMMKVTIEMPEEYMGDIMGDVTSRRGRVDGMEPRGNAQVVNAYVPLSEMLGYATSLRSHTQGRGTYTMYFDHYAEIPKSIAEDIIKKNKGE</sequence>
<feature type="chain" id="PRO_1000071150" description="Elongation factor G">
    <location>
        <begin position="1"/>
        <end position="693"/>
    </location>
</feature>
<feature type="domain" description="tr-type G">
    <location>
        <begin position="8"/>
        <end position="282"/>
    </location>
</feature>
<feature type="binding site" evidence="1">
    <location>
        <begin position="17"/>
        <end position="24"/>
    </location>
    <ligand>
        <name>GTP</name>
        <dbReference type="ChEBI" id="CHEBI:37565"/>
    </ligand>
</feature>
<feature type="binding site" evidence="1">
    <location>
        <begin position="81"/>
        <end position="85"/>
    </location>
    <ligand>
        <name>GTP</name>
        <dbReference type="ChEBI" id="CHEBI:37565"/>
    </ligand>
</feature>
<feature type="binding site" evidence="1">
    <location>
        <begin position="135"/>
        <end position="138"/>
    </location>
    <ligand>
        <name>GTP</name>
        <dbReference type="ChEBI" id="CHEBI:37565"/>
    </ligand>
</feature>
<protein>
    <recommendedName>
        <fullName evidence="1">Elongation factor G</fullName>
        <shortName evidence="1">EF-G</shortName>
    </recommendedName>
</protein>
<name>EFG_STAAE</name>
<gene>
    <name evidence="1" type="primary">fusA</name>
    <name type="ordered locus">NWMN_0509</name>
</gene>
<evidence type="ECO:0000255" key="1">
    <source>
        <dbReference type="HAMAP-Rule" id="MF_00054"/>
    </source>
</evidence>
<comment type="function">
    <text evidence="1">Catalyzes the GTP-dependent ribosomal translocation step during translation elongation. During this step, the ribosome changes from the pre-translocational (PRE) to the post-translocational (POST) state as the newly formed A-site-bound peptidyl-tRNA and P-site-bound deacylated tRNA move to the P and E sites, respectively. Catalyzes the coordinated movement of the two tRNA molecules, the mRNA and conformational changes in the ribosome.</text>
</comment>
<comment type="subcellular location">
    <subcellularLocation>
        <location evidence="1">Cytoplasm</location>
    </subcellularLocation>
</comment>
<comment type="similarity">
    <text evidence="1">Belongs to the TRAFAC class translation factor GTPase superfamily. Classic translation factor GTPase family. EF-G/EF-2 subfamily.</text>
</comment>
<dbReference type="EMBL" id="AP009351">
    <property type="protein sequence ID" value="BAF66781.1"/>
    <property type="molecule type" value="Genomic_DNA"/>
</dbReference>
<dbReference type="RefSeq" id="WP_000090316.1">
    <property type="nucleotide sequence ID" value="NC_009641.1"/>
</dbReference>
<dbReference type="SMR" id="A6QEJ9"/>
<dbReference type="KEGG" id="sae:NWMN_0509"/>
<dbReference type="HOGENOM" id="CLU_002794_4_1_9"/>
<dbReference type="Proteomes" id="UP000006386">
    <property type="component" value="Chromosome"/>
</dbReference>
<dbReference type="GO" id="GO:0005737">
    <property type="term" value="C:cytoplasm"/>
    <property type="evidence" value="ECO:0007669"/>
    <property type="project" value="UniProtKB-SubCell"/>
</dbReference>
<dbReference type="GO" id="GO:0005525">
    <property type="term" value="F:GTP binding"/>
    <property type="evidence" value="ECO:0007669"/>
    <property type="project" value="UniProtKB-UniRule"/>
</dbReference>
<dbReference type="GO" id="GO:0003924">
    <property type="term" value="F:GTPase activity"/>
    <property type="evidence" value="ECO:0007669"/>
    <property type="project" value="InterPro"/>
</dbReference>
<dbReference type="GO" id="GO:0003746">
    <property type="term" value="F:translation elongation factor activity"/>
    <property type="evidence" value="ECO:0007669"/>
    <property type="project" value="UniProtKB-UniRule"/>
</dbReference>
<dbReference type="GO" id="GO:0032790">
    <property type="term" value="P:ribosome disassembly"/>
    <property type="evidence" value="ECO:0007669"/>
    <property type="project" value="TreeGrafter"/>
</dbReference>
<dbReference type="CDD" id="cd01886">
    <property type="entry name" value="EF-G"/>
    <property type="match status" value="1"/>
</dbReference>
<dbReference type="CDD" id="cd16262">
    <property type="entry name" value="EFG_III"/>
    <property type="match status" value="1"/>
</dbReference>
<dbReference type="CDD" id="cd01434">
    <property type="entry name" value="EFG_mtEFG1_IV"/>
    <property type="match status" value="1"/>
</dbReference>
<dbReference type="CDD" id="cd03713">
    <property type="entry name" value="EFG_mtEFG_C"/>
    <property type="match status" value="1"/>
</dbReference>
<dbReference type="CDD" id="cd04088">
    <property type="entry name" value="EFG_mtEFG_II"/>
    <property type="match status" value="1"/>
</dbReference>
<dbReference type="FunFam" id="2.40.30.10:FF:000006">
    <property type="entry name" value="Elongation factor G"/>
    <property type="match status" value="1"/>
</dbReference>
<dbReference type="FunFam" id="3.30.230.10:FF:000003">
    <property type="entry name" value="Elongation factor G"/>
    <property type="match status" value="1"/>
</dbReference>
<dbReference type="FunFam" id="3.30.70.240:FF:000001">
    <property type="entry name" value="Elongation factor G"/>
    <property type="match status" value="1"/>
</dbReference>
<dbReference type="FunFam" id="3.30.70.870:FF:000001">
    <property type="entry name" value="Elongation factor G"/>
    <property type="match status" value="1"/>
</dbReference>
<dbReference type="FunFam" id="3.40.50.300:FF:000029">
    <property type="entry name" value="Elongation factor G"/>
    <property type="match status" value="1"/>
</dbReference>
<dbReference type="Gene3D" id="3.30.230.10">
    <property type="match status" value="1"/>
</dbReference>
<dbReference type="Gene3D" id="3.30.70.240">
    <property type="match status" value="1"/>
</dbReference>
<dbReference type="Gene3D" id="3.30.70.870">
    <property type="entry name" value="Elongation Factor G (Translational Gtpase), domain 3"/>
    <property type="match status" value="1"/>
</dbReference>
<dbReference type="Gene3D" id="3.40.50.300">
    <property type="entry name" value="P-loop containing nucleotide triphosphate hydrolases"/>
    <property type="match status" value="1"/>
</dbReference>
<dbReference type="Gene3D" id="2.40.30.10">
    <property type="entry name" value="Translation factors"/>
    <property type="match status" value="1"/>
</dbReference>
<dbReference type="HAMAP" id="MF_00054_B">
    <property type="entry name" value="EF_G_EF_2_B"/>
    <property type="match status" value="1"/>
</dbReference>
<dbReference type="InterPro" id="IPR041095">
    <property type="entry name" value="EFG_II"/>
</dbReference>
<dbReference type="InterPro" id="IPR009022">
    <property type="entry name" value="EFG_III"/>
</dbReference>
<dbReference type="InterPro" id="IPR035647">
    <property type="entry name" value="EFG_III/V"/>
</dbReference>
<dbReference type="InterPro" id="IPR047872">
    <property type="entry name" value="EFG_IV"/>
</dbReference>
<dbReference type="InterPro" id="IPR035649">
    <property type="entry name" value="EFG_V"/>
</dbReference>
<dbReference type="InterPro" id="IPR000640">
    <property type="entry name" value="EFG_V-like"/>
</dbReference>
<dbReference type="InterPro" id="IPR004161">
    <property type="entry name" value="EFTu-like_2"/>
</dbReference>
<dbReference type="InterPro" id="IPR031157">
    <property type="entry name" value="G_TR_CS"/>
</dbReference>
<dbReference type="InterPro" id="IPR027417">
    <property type="entry name" value="P-loop_NTPase"/>
</dbReference>
<dbReference type="InterPro" id="IPR020568">
    <property type="entry name" value="Ribosomal_Su5_D2-typ_SF"/>
</dbReference>
<dbReference type="InterPro" id="IPR014721">
    <property type="entry name" value="Ribsml_uS5_D2-typ_fold_subgr"/>
</dbReference>
<dbReference type="InterPro" id="IPR005225">
    <property type="entry name" value="Small_GTP-bd"/>
</dbReference>
<dbReference type="InterPro" id="IPR000795">
    <property type="entry name" value="T_Tr_GTP-bd_dom"/>
</dbReference>
<dbReference type="InterPro" id="IPR009000">
    <property type="entry name" value="Transl_B-barrel_sf"/>
</dbReference>
<dbReference type="InterPro" id="IPR004540">
    <property type="entry name" value="Transl_elong_EFG/EF2"/>
</dbReference>
<dbReference type="InterPro" id="IPR005517">
    <property type="entry name" value="Transl_elong_EFG/EF2_IV"/>
</dbReference>
<dbReference type="NCBIfam" id="TIGR00484">
    <property type="entry name" value="EF-G"/>
    <property type="match status" value="1"/>
</dbReference>
<dbReference type="NCBIfam" id="NF009379">
    <property type="entry name" value="PRK12740.1-3"/>
    <property type="match status" value="1"/>
</dbReference>
<dbReference type="NCBIfam" id="NF009381">
    <property type="entry name" value="PRK12740.1-5"/>
    <property type="match status" value="1"/>
</dbReference>
<dbReference type="NCBIfam" id="TIGR00231">
    <property type="entry name" value="small_GTP"/>
    <property type="match status" value="1"/>
</dbReference>
<dbReference type="PANTHER" id="PTHR43261:SF1">
    <property type="entry name" value="RIBOSOME-RELEASING FACTOR 2, MITOCHONDRIAL"/>
    <property type="match status" value="1"/>
</dbReference>
<dbReference type="PANTHER" id="PTHR43261">
    <property type="entry name" value="TRANSLATION ELONGATION FACTOR G-RELATED"/>
    <property type="match status" value="1"/>
</dbReference>
<dbReference type="Pfam" id="PF00679">
    <property type="entry name" value="EFG_C"/>
    <property type="match status" value="1"/>
</dbReference>
<dbReference type="Pfam" id="PF14492">
    <property type="entry name" value="EFG_III"/>
    <property type="match status" value="1"/>
</dbReference>
<dbReference type="Pfam" id="PF03764">
    <property type="entry name" value="EFG_IV"/>
    <property type="match status" value="1"/>
</dbReference>
<dbReference type="Pfam" id="PF00009">
    <property type="entry name" value="GTP_EFTU"/>
    <property type="match status" value="1"/>
</dbReference>
<dbReference type="Pfam" id="PF03144">
    <property type="entry name" value="GTP_EFTU_D2"/>
    <property type="match status" value="1"/>
</dbReference>
<dbReference type="PRINTS" id="PR00315">
    <property type="entry name" value="ELONGATNFCT"/>
</dbReference>
<dbReference type="SMART" id="SM00838">
    <property type="entry name" value="EFG_C"/>
    <property type="match status" value="1"/>
</dbReference>
<dbReference type="SMART" id="SM00889">
    <property type="entry name" value="EFG_IV"/>
    <property type="match status" value="1"/>
</dbReference>
<dbReference type="SUPFAM" id="SSF54980">
    <property type="entry name" value="EF-G C-terminal domain-like"/>
    <property type="match status" value="2"/>
</dbReference>
<dbReference type="SUPFAM" id="SSF52540">
    <property type="entry name" value="P-loop containing nucleoside triphosphate hydrolases"/>
    <property type="match status" value="1"/>
</dbReference>
<dbReference type="SUPFAM" id="SSF54211">
    <property type="entry name" value="Ribosomal protein S5 domain 2-like"/>
    <property type="match status" value="1"/>
</dbReference>
<dbReference type="SUPFAM" id="SSF50447">
    <property type="entry name" value="Translation proteins"/>
    <property type="match status" value="1"/>
</dbReference>
<dbReference type="PROSITE" id="PS00301">
    <property type="entry name" value="G_TR_1"/>
    <property type="match status" value="1"/>
</dbReference>
<dbReference type="PROSITE" id="PS51722">
    <property type="entry name" value="G_TR_2"/>
    <property type="match status" value="1"/>
</dbReference>
<accession>A6QEJ9</accession>
<reference key="1">
    <citation type="journal article" date="2008" name="J. Bacteriol.">
        <title>Genome sequence of Staphylococcus aureus strain Newman and comparative analysis of staphylococcal genomes: polymorphism and evolution of two major pathogenicity islands.</title>
        <authorList>
            <person name="Baba T."/>
            <person name="Bae T."/>
            <person name="Schneewind O."/>
            <person name="Takeuchi F."/>
            <person name="Hiramatsu K."/>
        </authorList>
    </citation>
    <scope>NUCLEOTIDE SEQUENCE [LARGE SCALE GENOMIC DNA]</scope>
    <source>
        <strain>Newman</strain>
    </source>
</reference>
<proteinExistence type="inferred from homology"/>
<keyword id="KW-0963">Cytoplasm</keyword>
<keyword id="KW-0251">Elongation factor</keyword>
<keyword id="KW-0342">GTP-binding</keyword>
<keyword id="KW-0547">Nucleotide-binding</keyword>
<keyword id="KW-0648">Protein biosynthesis</keyword>
<organism>
    <name type="scientific">Staphylococcus aureus (strain Newman)</name>
    <dbReference type="NCBI Taxonomy" id="426430"/>
    <lineage>
        <taxon>Bacteria</taxon>
        <taxon>Bacillati</taxon>
        <taxon>Bacillota</taxon>
        <taxon>Bacilli</taxon>
        <taxon>Bacillales</taxon>
        <taxon>Staphylococcaceae</taxon>
        <taxon>Staphylococcus</taxon>
    </lineage>
</organism>